<protein>
    <recommendedName>
        <fullName evidence="1">2-C-methyl-D-erythritol 2,4-cyclodiphosphate synthase</fullName>
        <shortName evidence="1">MECDP-synthase</shortName>
        <shortName evidence="1">MECPP-synthase</shortName>
        <shortName evidence="1">MECPS</shortName>
        <ecNumber evidence="1">4.6.1.12</ecNumber>
    </recommendedName>
</protein>
<keyword id="KW-0414">Isoprene biosynthesis</keyword>
<keyword id="KW-0456">Lyase</keyword>
<keyword id="KW-0479">Metal-binding</keyword>
<keyword id="KW-1185">Reference proteome</keyword>
<feature type="chain" id="PRO_1000094266" description="2-C-methyl-D-erythritol 2,4-cyclodiphosphate synthase">
    <location>
        <begin position="1"/>
        <end position="157"/>
    </location>
</feature>
<feature type="binding site" evidence="1">
    <location>
        <begin position="8"/>
        <end position="10"/>
    </location>
    <ligand>
        <name>4-CDP-2-C-methyl-D-erythritol 2-phosphate</name>
        <dbReference type="ChEBI" id="CHEBI:57919"/>
    </ligand>
</feature>
<feature type="binding site" evidence="1">
    <location>
        <position position="8"/>
    </location>
    <ligand>
        <name>a divalent metal cation</name>
        <dbReference type="ChEBI" id="CHEBI:60240"/>
    </ligand>
</feature>
<feature type="binding site" evidence="1">
    <location>
        <position position="10"/>
    </location>
    <ligand>
        <name>a divalent metal cation</name>
        <dbReference type="ChEBI" id="CHEBI:60240"/>
    </ligand>
</feature>
<feature type="binding site" evidence="1">
    <location>
        <begin position="34"/>
        <end position="35"/>
    </location>
    <ligand>
        <name>4-CDP-2-C-methyl-D-erythritol 2-phosphate</name>
        <dbReference type="ChEBI" id="CHEBI:57919"/>
    </ligand>
</feature>
<feature type="binding site" evidence="1">
    <location>
        <position position="42"/>
    </location>
    <ligand>
        <name>a divalent metal cation</name>
        <dbReference type="ChEBI" id="CHEBI:60240"/>
    </ligand>
</feature>
<feature type="binding site" evidence="1">
    <location>
        <begin position="56"/>
        <end position="58"/>
    </location>
    <ligand>
        <name>4-CDP-2-C-methyl-D-erythritol 2-phosphate</name>
        <dbReference type="ChEBI" id="CHEBI:57919"/>
    </ligand>
</feature>
<feature type="binding site" evidence="1">
    <location>
        <begin position="61"/>
        <end position="65"/>
    </location>
    <ligand>
        <name>4-CDP-2-C-methyl-D-erythritol 2-phosphate</name>
        <dbReference type="ChEBI" id="CHEBI:57919"/>
    </ligand>
</feature>
<feature type="binding site" evidence="1">
    <location>
        <begin position="100"/>
        <end position="106"/>
    </location>
    <ligand>
        <name>4-CDP-2-C-methyl-D-erythritol 2-phosphate</name>
        <dbReference type="ChEBI" id="CHEBI:57919"/>
    </ligand>
</feature>
<feature type="binding site" evidence="1">
    <location>
        <begin position="132"/>
        <end position="135"/>
    </location>
    <ligand>
        <name>4-CDP-2-C-methyl-D-erythritol 2-phosphate</name>
        <dbReference type="ChEBI" id="CHEBI:57919"/>
    </ligand>
</feature>
<feature type="binding site" evidence="1">
    <location>
        <position position="139"/>
    </location>
    <ligand>
        <name>4-CDP-2-C-methyl-D-erythritol 2-phosphate</name>
        <dbReference type="ChEBI" id="CHEBI:57919"/>
    </ligand>
</feature>
<feature type="site" description="Transition state stabilizer" evidence="1">
    <location>
        <position position="34"/>
    </location>
</feature>
<feature type="site" description="Transition state stabilizer" evidence="1">
    <location>
        <position position="133"/>
    </location>
</feature>
<name>ISPF_TRIL1</name>
<organism>
    <name type="scientific">Trichlorobacter lovleyi (strain ATCC BAA-1151 / DSM 17278 / SZ)</name>
    <name type="common">Geobacter lovleyi</name>
    <dbReference type="NCBI Taxonomy" id="398767"/>
    <lineage>
        <taxon>Bacteria</taxon>
        <taxon>Pseudomonadati</taxon>
        <taxon>Thermodesulfobacteriota</taxon>
        <taxon>Desulfuromonadia</taxon>
        <taxon>Geobacterales</taxon>
        <taxon>Geobacteraceae</taxon>
        <taxon>Trichlorobacter</taxon>
    </lineage>
</organism>
<reference key="1">
    <citation type="submission" date="2008-05" db="EMBL/GenBank/DDBJ databases">
        <title>Complete sequence of chromosome of Geobacter lovleyi SZ.</title>
        <authorList>
            <consortium name="US DOE Joint Genome Institute"/>
            <person name="Lucas S."/>
            <person name="Copeland A."/>
            <person name="Lapidus A."/>
            <person name="Glavina del Rio T."/>
            <person name="Dalin E."/>
            <person name="Tice H."/>
            <person name="Bruce D."/>
            <person name="Goodwin L."/>
            <person name="Pitluck S."/>
            <person name="Chertkov O."/>
            <person name="Meincke L."/>
            <person name="Brettin T."/>
            <person name="Detter J.C."/>
            <person name="Han C."/>
            <person name="Tapia R."/>
            <person name="Kuske C.R."/>
            <person name="Schmutz J."/>
            <person name="Larimer F."/>
            <person name="Land M."/>
            <person name="Hauser L."/>
            <person name="Kyrpides N."/>
            <person name="Mikhailova N."/>
            <person name="Sung Y."/>
            <person name="Fletcher K.E."/>
            <person name="Ritalahti K.M."/>
            <person name="Loeffler F.E."/>
            <person name="Richardson P."/>
        </authorList>
    </citation>
    <scope>NUCLEOTIDE SEQUENCE [LARGE SCALE GENOMIC DNA]</scope>
    <source>
        <strain>ATCC BAA-1151 / DSM 17278 / SZ</strain>
    </source>
</reference>
<gene>
    <name evidence="1" type="primary">ispF</name>
    <name type="ordered locus">Glov_3480</name>
</gene>
<dbReference type="EC" id="4.6.1.12" evidence="1"/>
<dbReference type="EMBL" id="CP001089">
    <property type="protein sequence ID" value="ACD97183.1"/>
    <property type="molecule type" value="Genomic_DNA"/>
</dbReference>
<dbReference type="RefSeq" id="WP_012471503.1">
    <property type="nucleotide sequence ID" value="NC_010814.1"/>
</dbReference>
<dbReference type="SMR" id="B3E280"/>
<dbReference type="STRING" id="398767.Glov_3480"/>
<dbReference type="KEGG" id="glo:Glov_3480"/>
<dbReference type="eggNOG" id="COG0245">
    <property type="taxonomic scope" value="Bacteria"/>
</dbReference>
<dbReference type="HOGENOM" id="CLU_084630_2_0_7"/>
<dbReference type="OrthoDB" id="9804336at2"/>
<dbReference type="UniPathway" id="UPA00056">
    <property type="reaction ID" value="UER00095"/>
</dbReference>
<dbReference type="Proteomes" id="UP000002420">
    <property type="component" value="Chromosome"/>
</dbReference>
<dbReference type="GO" id="GO:0008685">
    <property type="term" value="F:2-C-methyl-D-erythritol 2,4-cyclodiphosphate synthase activity"/>
    <property type="evidence" value="ECO:0007669"/>
    <property type="project" value="UniProtKB-UniRule"/>
</dbReference>
<dbReference type="GO" id="GO:0046872">
    <property type="term" value="F:metal ion binding"/>
    <property type="evidence" value="ECO:0007669"/>
    <property type="project" value="UniProtKB-KW"/>
</dbReference>
<dbReference type="GO" id="GO:0019288">
    <property type="term" value="P:isopentenyl diphosphate biosynthetic process, methylerythritol 4-phosphate pathway"/>
    <property type="evidence" value="ECO:0007669"/>
    <property type="project" value="UniProtKB-UniRule"/>
</dbReference>
<dbReference type="GO" id="GO:0016114">
    <property type="term" value="P:terpenoid biosynthetic process"/>
    <property type="evidence" value="ECO:0007669"/>
    <property type="project" value="InterPro"/>
</dbReference>
<dbReference type="CDD" id="cd00554">
    <property type="entry name" value="MECDP_synthase"/>
    <property type="match status" value="1"/>
</dbReference>
<dbReference type="FunFam" id="3.30.1330.50:FF:000001">
    <property type="entry name" value="2-C-methyl-D-erythritol 2,4-cyclodiphosphate synthase"/>
    <property type="match status" value="1"/>
</dbReference>
<dbReference type="Gene3D" id="3.30.1330.50">
    <property type="entry name" value="2-C-methyl-D-erythritol 2,4-cyclodiphosphate synthase"/>
    <property type="match status" value="1"/>
</dbReference>
<dbReference type="HAMAP" id="MF_00107">
    <property type="entry name" value="IspF"/>
    <property type="match status" value="1"/>
</dbReference>
<dbReference type="InterPro" id="IPR003526">
    <property type="entry name" value="MECDP_synthase"/>
</dbReference>
<dbReference type="InterPro" id="IPR020555">
    <property type="entry name" value="MECDP_synthase_CS"/>
</dbReference>
<dbReference type="InterPro" id="IPR036571">
    <property type="entry name" value="MECDP_synthase_sf"/>
</dbReference>
<dbReference type="NCBIfam" id="TIGR00151">
    <property type="entry name" value="ispF"/>
    <property type="match status" value="1"/>
</dbReference>
<dbReference type="PANTHER" id="PTHR43181">
    <property type="entry name" value="2-C-METHYL-D-ERYTHRITOL 2,4-CYCLODIPHOSPHATE SYNTHASE, CHLOROPLASTIC"/>
    <property type="match status" value="1"/>
</dbReference>
<dbReference type="PANTHER" id="PTHR43181:SF1">
    <property type="entry name" value="2-C-METHYL-D-ERYTHRITOL 2,4-CYCLODIPHOSPHATE SYNTHASE, CHLOROPLASTIC"/>
    <property type="match status" value="1"/>
</dbReference>
<dbReference type="Pfam" id="PF02542">
    <property type="entry name" value="YgbB"/>
    <property type="match status" value="1"/>
</dbReference>
<dbReference type="SUPFAM" id="SSF69765">
    <property type="entry name" value="IpsF-like"/>
    <property type="match status" value="1"/>
</dbReference>
<dbReference type="PROSITE" id="PS01350">
    <property type="entry name" value="ISPF"/>
    <property type="match status" value="1"/>
</dbReference>
<proteinExistence type="inferred from homology"/>
<sequence length="157" mass="16747">MRIGHGYDVHRLVEDRKLIMGGVDIPWEKGLLGHSDADVLLHAIADALLGALAMGDIGKHFPDTDPAFKGADSMKLLEHVVGLIRTQGYAVGNLDATIIAQRPKMAPHIQAMRENVARACGVEVDRINVKATTEEGLGFTGTGEGISAHAVVLLIPQ</sequence>
<evidence type="ECO:0000255" key="1">
    <source>
        <dbReference type="HAMAP-Rule" id="MF_00107"/>
    </source>
</evidence>
<comment type="function">
    <text evidence="1">Involved in the biosynthesis of isopentenyl diphosphate (IPP) and dimethylallyl diphosphate (DMAPP), two major building blocks of isoprenoid compounds. Catalyzes the conversion of 4-diphosphocytidyl-2-C-methyl-D-erythritol 2-phosphate (CDP-ME2P) to 2-C-methyl-D-erythritol 2,4-cyclodiphosphate (ME-CPP) with a corresponding release of cytidine 5-monophosphate (CMP).</text>
</comment>
<comment type="catalytic activity">
    <reaction evidence="1">
        <text>4-CDP-2-C-methyl-D-erythritol 2-phosphate = 2-C-methyl-D-erythritol 2,4-cyclic diphosphate + CMP</text>
        <dbReference type="Rhea" id="RHEA:23864"/>
        <dbReference type="ChEBI" id="CHEBI:57919"/>
        <dbReference type="ChEBI" id="CHEBI:58483"/>
        <dbReference type="ChEBI" id="CHEBI:60377"/>
        <dbReference type="EC" id="4.6.1.12"/>
    </reaction>
</comment>
<comment type="cofactor">
    <cofactor evidence="1">
        <name>a divalent metal cation</name>
        <dbReference type="ChEBI" id="CHEBI:60240"/>
    </cofactor>
    <text evidence="1">Binds 1 divalent metal cation per subunit.</text>
</comment>
<comment type="pathway">
    <text evidence="1">Isoprenoid biosynthesis; isopentenyl diphosphate biosynthesis via DXP pathway; isopentenyl diphosphate from 1-deoxy-D-xylulose 5-phosphate: step 4/6.</text>
</comment>
<comment type="subunit">
    <text evidence="1">Homotrimer.</text>
</comment>
<comment type="similarity">
    <text evidence="1">Belongs to the IspF family.</text>
</comment>
<accession>B3E280</accession>